<accession>B8G607</accession>
<gene>
    <name evidence="1" type="primary">prfB</name>
    <name type="ordered locus">Cagg_2879</name>
</gene>
<feature type="chain" id="PRO_1000193549" description="Peptide chain release factor 2">
    <location>
        <begin position="1"/>
        <end position="367"/>
    </location>
</feature>
<feature type="modified residue" description="N5-methylglutamine" evidence="1">
    <location>
        <position position="250"/>
    </location>
</feature>
<comment type="function">
    <text evidence="1">Peptide chain release factor 2 directs the termination of translation in response to the peptide chain termination codons UGA and UAA.</text>
</comment>
<comment type="subcellular location">
    <subcellularLocation>
        <location evidence="1">Cytoplasm</location>
    </subcellularLocation>
</comment>
<comment type="PTM">
    <text evidence="1">Methylated by PrmC. Methylation increases the termination efficiency of RF2.</text>
</comment>
<comment type="similarity">
    <text evidence="1">Belongs to the prokaryotic/mitochondrial release factor family.</text>
</comment>
<keyword id="KW-0963">Cytoplasm</keyword>
<keyword id="KW-0488">Methylation</keyword>
<keyword id="KW-0648">Protein biosynthesis</keyword>
<dbReference type="EMBL" id="CP001337">
    <property type="protein sequence ID" value="ACL25740.1"/>
    <property type="molecule type" value="Genomic_DNA"/>
</dbReference>
<dbReference type="SMR" id="B8G607"/>
<dbReference type="STRING" id="326427.Cagg_2879"/>
<dbReference type="KEGG" id="cag:Cagg_2879"/>
<dbReference type="eggNOG" id="COG1186">
    <property type="taxonomic scope" value="Bacteria"/>
</dbReference>
<dbReference type="HOGENOM" id="CLU_221244_3_1_0"/>
<dbReference type="Proteomes" id="UP000002508">
    <property type="component" value="Chromosome"/>
</dbReference>
<dbReference type="GO" id="GO:0005737">
    <property type="term" value="C:cytoplasm"/>
    <property type="evidence" value="ECO:0007669"/>
    <property type="project" value="UniProtKB-SubCell"/>
</dbReference>
<dbReference type="GO" id="GO:0016149">
    <property type="term" value="F:translation release factor activity, codon specific"/>
    <property type="evidence" value="ECO:0007669"/>
    <property type="project" value="UniProtKB-UniRule"/>
</dbReference>
<dbReference type="FunFam" id="3.30.160.20:FF:000004">
    <property type="entry name" value="Peptide chain release factor 1"/>
    <property type="match status" value="1"/>
</dbReference>
<dbReference type="Gene3D" id="3.30.160.20">
    <property type="match status" value="1"/>
</dbReference>
<dbReference type="Gene3D" id="3.30.70.1660">
    <property type="match status" value="1"/>
</dbReference>
<dbReference type="Gene3D" id="1.20.58.410">
    <property type="entry name" value="Release factor"/>
    <property type="match status" value="1"/>
</dbReference>
<dbReference type="HAMAP" id="MF_00094">
    <property type="entry name" value="Rel_fac_2"/>
    <property type="match status" value="1"/>
</dbReference>
<dbReference type="InterPro" id="IPR005139">
    <property type="entry name" value="PCRF"/>
</dbReference>
<dbReference type="InterPro" id="IPR000352">
    <property type="entry name" value="Pep_chain_release_fac_I"/>
</dbReference>
<dbReference type="InterPro" id="IPR045853">
    <property type="entry name" value="Pep_chain_release_fac_I_sf"/>
</dbReference>
<dbReference type="InterPro" id="IPR004374">
    <property type="entry name" value="PrfB"/>
</dbReference>
<dbReference type="NCBIfam" id="TIGR00020">
    <property type="entry name" value="prfB"/>
    <property type="match status" value="1"/>
</dbReference>
<dbReference type="PANTHER" id="PTHR43116:SF3">
    <property type="entry name" value="CLASS I PEPTIDE CHAIN RELEASE FACTOR"/>
    <property type="match status" value="1"/>
</dbReference>
<dbReference type="PANTHER" id="PTHR43116">
    <property type="entry name" value="PEPTIDE CHAIN RELEASE FACTOR 2"/>
    <property type="match status" value="1"/>
</dbReference>
<dbReference type="Pfam" id="PF03462">
    <property type="entry name" value="PCRF"/>
    <property type="match status" value="1"/>
</dbReference>
<dbReference type="Pfam" id="PF00472">
    <property type="entry name" value="RF-1"/>
    <property type="match status" value="1"/>
</dbReference>
<dbReference type="SMART" id="SM00937">
    <property type="entry name" value="PCRF"/>
    <property type="match status" value="1"/>
</dbReference>
<dbReference type="SUPFAM" id="SSF75620">
    <property type="entry name" value="Release factor"/>
    <property type="match status" value="1"/>
</dbReference>
<dbReference type="PROSITE" id="PS00745">
    <property type="entry name" value="RF_PROK_I"/>
    <property type="match status" value="1"/>
</dbReference>
<name>RF2_CHLAD</name>
<proteinExistence type="inferred from homology"/>
<protein>
    <recommendedName>
        <fullName evidence="1">Peptide chain release factor 2</fullName>
        <shortName evidence="1">RF-2</shortName>
    </recommendedName>
</protein>
<reference key="1">
    <citation type="submission" date="2008-12" db="EMBL/GenBank/DDBJ databases">
        <title>Complete sequence of Chloroflexus aggregans DSM 9485.</title>
        <authorList>
            <consortium name="US DOE Joint Genome Institute"/>
            <person name="Lucas S."/>
            <person name="Copeland A."/>
            <person name="Lapidus A."/>
            <person name="Glavina del Rio T."/>
            <person name="Dalin E."/>
            <person name="Tice H."/>
            <person name="Pitluck S."/>
            <person name="Foster B."/>
            <person name="Larimer F."/>
            <person name="Land M."/>
            <person name="Hauser L."/>
            <person name="Kyrpides N."/>
            <person name="Mikhailova N."/>
            <person name="Bryant D.A."/>
            <person name="Richardson P."/>
        </authorList>
    </citation>
    <scope>NUCLEOTIDE SEQUENCE [LARGE SCALE GENOMIC DNA]</scope>
    <source>
        <strain>MD-66 / DSM 9485</strain>
    </source>
</reference>
<sequence length="367" mass="41732">MLAELHEELETIRERFANLRGHLDLAAKQAEIEQLEVRASDPELWNTPRVAQELMQRLTRLKEEVALWNDLDHRMTSLAELIELAEQEGDESLAADLAAELRAVQREVAQRELEILLSGPYDDRDAFLSIQAGMGGTDAQDWAAMLLRMYTRWAERRGYTVNLIDLSEGEEAGIKSATIEIRGPYAYGYARAEAGVHRLIRLSPFNAAHTRQTSFARVEVMPEVDDAPEVEIKPEDLRIDVFRSGGHGGQGVNTTDSAVRITHLPTGIVVTCQNERSQIQNRETALRVLRARLLERELQRQAEERARLRGEYREAAFGNQMRTYYLHPSTLVKDHRTDYETSNVQAVLDGEIDPFIEAFLRANVRES</sequence>
<evidence type="ECO:0000255" key="1">
    <source>
        <dbReference type="HAMAP-Rule" id="MF_00094"/>
    </source>
</evidence>
<organism>
    <name type="scientific">Chloroflexus aggregans (strain MD-66 / DSM 9485)</name>
    <dbReference type="NCBI Taxonomy" id="326427"/>
    <lineage>
        <taxon>Bacteria</taxon>
        <taxon>Bacillati</taxon>
        <taxon>Chloroflexota</taxon>
        <taxon>Chloroflexia</taxon>
        <taxon>Chloroflexales</taxon>
        <taxon>Chloroflexineae</taxon>
        <taxon>Chloroflexaceae</taxon>
        <taxon>Chloroflexus</taxon>
    </lineage>
</organism>